<protein>
    <recommendedName>
        <fullName evidence="1">Lipoprotein signal peptidase</fullName>
        <ecNumber evidence="1">3.4.23.36</ecNumber>
    </recommendedName>
    <alternativeName>
        <fullName evidence="1">Prolipoprotein signal peptidase</fullName>
    </alternativeName>
    <alternativeName>
        <fullName evidence="1">Signal peptidase II</fullName>
        <shortName evidence="1">SPase II</shortName>
    </alternativeName>
</protein>
<comment type="function">
    <text evidence="1">This protein specifically catalyzes the removal of signal peptides from prolipoproteins.</text>
</comment>
<comment type="catalytic activity">
    <reaction evidence="1">
        <text>Release of signal peptides from bacterial membrane prolipoproteins. Hydrolyzes -Xaa-Yaa-Zaa-|-(S,diacylglyceryl)Cys-, in which Xaa is hydrophobic (preferably Leu), and Yaa (Ala or Ser) and Zaa (Gly or Ala) have small, neutral side chains.</text>
        <dbReference type="EC" id="3.4.23.36"/>
    </reaction>
</comment>
<comment type="pathway">
    <text evidence="1">Protein modification; lipoprotein biosynthesis (signal peptide cleavage).</text>
</comment>
<comment type="subcellular location">
    <subcellularLocation>
        <location evidence="1">Cell inner membrane</location>
        <topology evidence="1">Multi-pass membrane protein</topology>
    </subcellularLocation>
</comment>
<comment type="similarity">
    <text evidence="1">Belongs to the peptidase A8 family.</text>
</comment>
<proteinExistence type="inferred from homology"/>
<sequence length="168" mass="19200">MSGKAQIFKQTGVRWLWLALVVFLADIGIKFIVMENMGYGWANRIEVLPFFNLLYVHNYGAAFSFLSDQAGWQRWLFTGIAFVVTGLLTYWMSKLPAAEKWNNVAYAMIIGGAIGNVFDRMVHGFVVDYLDFYWGTYHWPAFNLADTAICLGAAMIILDGFRKKEEEK</sequence>
<dbReference type="EC" id="3.4.23.36" evidence="1"/>
<dbReference type="EMBL" id="AE016795">
    <property type="protein sequence ID" value="AAO09025.1"/>
    <property type="molecule type" value="Genomic_DNA"/>
</dbReference>
<dbReference type="RefSeq" id="WP_011078595.1">
    <property type="nucleotide sequence ID" value="NC_004459.3"/>
</dbReference>
<dbReference type="SMR" id="Q8DES8"/>
<dbReference type="MEROPS" id="A08.001"/>
<dbReference type="KEGG" id="vvu:VV1_0506"/>
<dbReference type="HOGENOM" id="CLU_083252_4_0_6"/>
<dbReference type="UniPathway" id="UPA00665"/>
<dbReference type="Proteomes" id="UP000002275">
    <property type="component" value="Chromosome 1"/>
</dbReference>
<dbReference type="GO" id="GO:0005886">
    <property type="term" value="C:plasma membrane"/>
    <property type="evidence" value="ECO:0007669"/>
    <property type="project" value="UniProtKB-SubCell"/>
</dbReference>
<dbReference type="GO" id="GO:0004190">
    <property type="term" value="F:aspartic-type endopeptidase activity"/>
    <property type="evidence" value="ECO:0007669"/>
    <property type="project" value="UniProtKB-UniRule"/>
</dbReference>
<dbReference type="GO" id="GO:0006508">
    <property type="term" value="P:proteolysis"/>
    <property type="evidence" value="ECO:0007669"/>
    <property type="project" value="UniProtKB-KW"/>
</dbReference>
<dbReference type="HAMAP" id="MF_00161">
    <property type="entry name" value="LspA"/>
    <property type="match status" value="1"/>
</dbReference>
<dbReference type="InterPro" id="IPR001872">
    <property type="entry name" value="Peptidase_A8"/>
</dbReference>
<dbReference type="NCBIfam" id="TIGR00077">
    <property type="entry name" value="lspA"/>
    <property type="match status" value="1"/>
</dbReference>
<dbReference type="PANTHER" id="PTHR33695">
    <property type="entry name" value="LIPOPROTEIN SIGNAL PEPTIDASE"/>
    <property type="match status" value="1"/>
</dbReference>
<dbReference type="PANTHER" id="PTHR33695:SF1">
    <property type="entry name" value="LIPOPROTEIN SIGNAL PEPTIDASE"/>
    <property type="match status" value="1"/>
</dbReference>
<dbReference type="Pfam" id="PF01252">
    <property type="entry name" value="Peptidase_A8"/>
    <property type="match status" value="1"/>
</dbReference>
<dbReference type="PRINTS" id="PR00781">
    <property type="entry name" value="LIPOSIGPTASE"/>
</dbReference>
<dbReference type="PROSITE" id="PS00855">
    <property type="entry name" value="SPASE_II"/>
    <property type="match status" value="1"/>
</dbReference>
<name>LSPA_VIBVU</name>
<organism>
    <name type="scientific">Vibrio vulnificus (strain CMCP6)</name>
    <dbReference type="NCBI Taxonomy" id="216895"/>
    <lineage>
        <taxon>Bacteria</taxon>
        <taxon>Pseudomonadati</taxon>
        <taxon>Pseudomonadota</taxon>
        <taxon>Gammaproteobacteria</taxon>
        <taxon>Vibrionales</taxon>
        <taxon>Vibrionaceae</taxon>
        <taxon>Vibrio</taxon>
    </lineage>
</organism>
<evidence type="ECO:0000255" key="1">
    <source>
        <dbReference type="HAMAP-Rule" id="MF_00161"/>
    </source>
</evidence>
<gene>
    <name evidence="1" type="primary">lspA</name>
    <name type="ordered locus">VV1_0506</name>
</gene>
<keyword id="KW-0064">Aspartyl protease</keyword>
<keyword id="KW-0997">Cell inner membrane</keyword>
<keyword id="KW-1003">Cell membrane</keyword>
<keyword id="KW-0378">Hydrolase</keyword>
<keyword id="KW-0472">Membrane</keyword>
<keyword id="KW-0645">Protease</keyword>
<keyword id="KW-0812">Transmembrane</keyword>
<keyword id="KW-1133">Transmembrane helix</keyword>
<feature type="chain" id="PRO_0000178832" description="Lipoprotein signal peptidase">
    <location>
        <begin position="1"/>
        <end position="168"/>
    </location>
</feature>
<feature type="transmembrane region" description="Helical" evidence="1">
    <location>
        <begin position="15"/>
        <end position="35"/>
    </location>
</feature>
<feature type="transmembrane region" description="Helical" evidence="1">
    <location>
        <begin position="47"/>
        <end position="67"/>
    </location>
</feature>
<feature type="transmembrane region" description="Helical" evidence="1">
    <location>
        <begin position="75"/>
        <end position="95"/>
    </location>
</feature>
<feature type="transmembrane region" description="Helical" evidence="1">
    <location>
        <begin position="107"/>
        <end position="127"/>
    </location>
</feature>
<feature type="transmembrane region" description="Helical" evidence="1">
    <location>
        <begin position="141"/>
        <end position="161"/>
    </location>
</feature>
<feature type="active site" evidence="1">
    <location>
        <position position="128"/>
    </location>
</feature>
<feature type="active site" evidence="1">
    <location>
        <position position="146"/>
    </location>
</feature>
<reference key="1">
    <citation type="submission" date="2002-12" db="EMBL/GenBank/DDBJ databases">
        <title>Complete genome sequence of Vibrio vulnificus CMCP6.</title>
        <authorList>
            <person name="Rhee J.H."/>
            <person name="Kim S.Y."/>
            <person name="Chung S.S."/>
            <person name="Kim J.J."/>
            <person name="Moon Y.H."/>
            <person name="Jeong H."/>
            <person name="Choy H.E."/>
        </authorList>
    </citation>
    <scope>NUCLEOTIDE SEQUENCE [LARGE SCALE GENOMIC DNA]</scope>
    <source>
        <strain>CMCP6</strain>
    </source>
</reference>
<accession>Q8DES8</accession>